<sequence>MKLRANRVGEQMKKELGDIISRKIKDPRVGFVTVTDVQVSGDLQIATVYISVLGDEEQKENTLKGLAKAKGFIRSEIGQRIRLRKTPEISFEFDESIGYGHRIDTLLHQINKDGKREE</sequence>
<proteinExistence type="inferred from homology"/>
<protein>
    <recommendedName>
        <fullName evidence="1">Ribosome-binding factor A</fullName>
    </recommendedName>
</protein>
<reference key="1">
    <citation type="submission" date="2009-02" db="EMBL/GenBank/DDBJ databases">
        <title>Genome sequence of Bacillus cereus 03BB102.</title>
        <authorList>
            <person name="Dodson R.J."/>
            <person name="Jackson P."/>
            <person name="Munk A.C."/>
            <person name="Brettin T."/>
            <person name="Bruce D."/>
            <person name="Detter C."/>
            <person name="Tapia R."/>
            <person name="Han C."/>
            <person name="Sutton G."/>
            <person name="Sims D."/>
        </authorList>
    </citation>
    <scope>NUCLEOTIDE SEQUENCE [LARGE SCALE GENOMIC DNA]</scope>
    <source>
        <strain>03BB102</strain>
    </source>
</reference>
<name>RBFA_BACC3</name>
<comment type="function">
    <text evidence="1">One of several proteins that assist in the late maturation steps of the functional core of the 30S ribosomal subunit. Associates with free 30S ribosomal subunits (but not with 30S subunits that are part of 70S ribosomes or polysomes). Required for efficient processing of 16S rRNA. May interact with the 5'-terminal helix region of 16S rRNA.</text>
</comment>
<comment type="subunit">
    <text evidence="1">Monomer. Binds 30S ribosomal subunits, but not 50S ribosomal subunits or 70S ribosomes.</text>
</comment>
<comment type="subcellular location">
    <subcellularLocation>
        <location evidence="1">Cytoplasm</location>
    </subcellularLocation>
</comment>
<comment type="similarity">
    <text evidence="1">Belongs to the RbfA family.</text>
</comment>
<evidence type="ECO:0000255" key="1">
    <source>
        <dbReference type="HAMAP-Rule" id="MF_00003"/>
    </source>
</evidence>
<feature type="chain" id="PRO_1000193227" description="Ribosome-binding factor A">
    <location>
        <begin position="1"/>
        <end position="118"/>
    </location>
</feature>
<organism>
    <name type="scientific">Bacillus cereus (strain 03BB102)</name>
    <dbReference type="NCBI Taxonomy" id="572264"/>
    <lineage>
        <taxon>Bacteria</taxon>
        <taxon>Bacillati</taxon>
        <taxon>Bacillota</taxon>
        <taxon>Bacilli</taxon>
        <taxon>Bacillales</taxon>
        <taxon>Bacillaceae</taxon>
        <taxon>Bacillus</taxon>
        <taxon>Bacillus cereus group</taxon>
    </lineage>
</organism>
<accession>C1EP33</accession>
<dbReference type="EMBL" id="CP001407">
    <property type="protein sequence ID" value="ACO30588.1"/>
    <property type="molecule type" value="Genomic_DNA"/>
</dbReference>
<dbReference type="RefSeq" id="WP_000776442.1">
    <property type="nucleotide sequence ID" value="NZ_CP009318.1"/>
</dbReference>
<dbReference type="SMR" id="C1EP33"/>
<dbReference type="KEGG" id="bcx:BCA_3907"/>
<dbReference type="PATRIC" id="fig|572264.18.peg.3864"/>
<dbReference type="Proteomes" id="UP000002210">
    <property type="component" value="Chromosome"/>
</dbReference>
<dbReference type="GO" id="GO:0005829">
    <property type="term" value="C:cytosol"/>
    <property type="evidence" value="ECO:0007669"/>
    <property type="project" value="TreeGrafter"/>
</dbReference>
<dbReference type="GO" id="GO:0043024">
    <property type="term" value="F:ribosomal small subunit binding"/>
    <property type="evidence" value="ECO:0007669"/>
    <property type="project" value="TreeGrafter"/>
</dbReference>
<dbReference type="GO" id="GO:0030490">
    <property type="term" value="P:maturation of SSU-rRNA"/>
    <property type="evidence" value="ECO:0007669"/>
    <property type="project" value="UniProtKB-UniRule"/>
</dbReference>
<dbReference type="FunFam" id="3.30.300.20:FF:000009">
    <property type="entry name" value="Ribosome-binding factor A"/>
    <property type="match status" value="1"/>
</dbReference>
<dbReference type="Gene3D" id="3.30.300.20">
    <property type="match status" value="1"/>
</dbReference>
<dbReference type="HAMAP" id="MF_00003">
    <property type="entry name" value="RbfA"/>
    <property type="match status" value="1"/>
</dbReference>
<dbReference type="InterPro" id="IPR015946">
    <property type="entry name" value="KH_dom-like_a/b"/>
</dbReference>
<dbReference type="InterPro" id="IPR000238">
    <property type="entry name" value="RbfA"/>
</dbReference>
<dbReference type="InterPro" id="IPR023799">
    <property type="entry name" value="RbfA_dom_sf"/>
</dbReference>
<dbReference type="InterPro" id="IPR020053">
    <property type="entry name" value="Ribosome-bd_factorA_CS"/>
</dbReference>
<dbReference type="NCBIfam" id="TIGR00082">
    <property type="entry name" value="rbfA"/>
    <property type="match status" value="1"/>
</dbReference>
<dbReference type="PANTHER" id="PTHR33515">
    <property type="entry name" value="RIBOSOME-BINDING FACTOR A, CHLOROPLASTIC-RELATED"/>
    <property type="match status" value="1"/>
</dbReference>
<dbReference type="PANTHER" id="PTHR33515:SF1">
    <property type="entry name" value="RIBOSOME-BINDING FACTOR A, CHLOROPLASTIC-RELATED"/>
    <property type="match status" value="1"/>
</dbReference>
<dbReference type="Pfam" id="PF02033">
    <property type="entry name" value="RBFA"/>
    <property type="match status" value="1"/>
</dbReference>
<dbReference type="SUPFAM" id="SSF89919">
    <property type="entry name" value="Ribosome-binding factor A, RbfA"/>
    <property type="match status" value="1"/>
</dbReference>
<dbReference type="PROSITE" id="PS01319">
    <property type="entry name" value="RBFA"/>
    <property type="match status" value="1"/>
</dbReference>
<gene>
    <name evidence="1" type="primary">rbfA</name>
    <name type="ordered locus">BCA_3907</name>
</gene>
<keyword id="KW-0963">Cytoplasm</keyword>
<keyword id="KW-0690">Ribosome biogenesis</keyword>